<name>RL27_MYCPU</name>
<comment type="similarity">
    <text evidence="1">Belongs to the bacterial ribosomal protein bL27 family.</text>
</comment>
<protein>
    <recommendedName>
        <fullName evidence="1">Large ribosomal subunit protein bL27</fullName>
    </recommendedName>
    <alternativeName>
        <fullName evidence="3">50S ribosomal protein L27</fullName>
    </alternativeName>
</protein>
<proteinExistence type="inferred from homology"/>
<dbReference type="EMBL" id="AL445564">
    <property type="protein sequence ID" value="CAC13502.1"/>
    <property type="molecule type" value="Genomic_DNA"/>
</dbReference>
<dbReference type="PIR" id="A99553">
    <property type="entry name" value="A99553"/>
</dbReference>
<dbReference type="RefSeq" id="WP_010925133.1">
    <property type="nucleotide sequence ID" value="NC_002771.1"/>
</dbReference>
<dbReference type="SMR" id="Q98QN2"/>
<dbReference type="STRING" id="272635.gene:17576920"/>
<dbReference type="KEGG" id="mpu:MYPU_3290"/>
<dbReference type="eggNOG" id="COG0211">
    <property type="taxonomic scope" value="Bacteria"/>
</dbReference>
<dbReference type="HOGENOM" id="CLU_095424_4_0_14"/>
<dbReference type="BioCyc" id="MPUL272635:G1GT6-329-MONOMER"/>
<dbReference type="Proteomes" id="UP000000528">
    <property type="component" value="Chromosome"/>
</dbReference>
<dbReference type="GO" id="GO:0022625">
    <property type="term" value="C:cytosolic large ribosomal subunit"/>
    <property type="evidence" value="ECO:0007669"/>
    <property type="project" value="TreeGrafter"/>
</dbReference>
<dbReference type="GO" id="GO:0003735">
    <property type="term" value="F:structural constituent of ribosome"/>
    <property type="evidence" value="ECO:0007669"/>
    <property type="project" value="InterPro"/>
</dbReference>
<dbReference type="GO" id="GO:0006412">
    <property type="term" value="P:translation"/>
    <property type="evidence" value="ECO:0007669"/>
    <property type="project" value="UniProtKB-UniRule"/>
</dbReference>
<dbReference type="FunFam" id="2.40.50.100:FF:000004">
    <property type="entry name" value="50S ribosomal protein L27"/>
    <property type="match status" value="1"/>
</dbReference>
<dbReference type="Gene3D" id="2.40.50.100">
    <property type="match status" value="1"/>
</dbReference>
<dbReference type="HAMAP" id="MF_00539">
    <property type="entry name" value="Ribosomal_bL27"/>
    <property type="match status" value="1"/>
</dbReference>
<dbReference type="InterPro" id="IPR001684">
    <property type="entry name" value="Ribosomal_bL27"/>
</dbReference>
<dbReference type="InterPro" id="IPR018261">
    <property type="entry name" value="Ribosomal_bL27_CS"/>
</dbReference>
<dbReference type="NCBIfam" id="TIGR00062">
    <property type="entry name" value="L27"/>
    <property type="match status" value="1"/>
</dbReference>
<dbReference type="PANTHER" id="PTHR15893:SF0">
    <property type="entry name" value="LARGE RIBOSOMAL SUBUNIT PROTEIN BL27M"/>
    <property type="match status" value="1"/>
</dbReference>
<dbReference type="PANTHER" id="PTHR15893">
    <property type="entry name" value="RIBOSOMAL PROTEIN L27"/>
    <property type="match status" value="1"/>
</dbReference>
<dbReference type="Pfam" id="PF01016">
    <property type="entry name" value="Ribosomal_L27"/>
    <property type="match status" value="1"/>
</dbReference>
<dbReference type="PRINTS" id="PR00063">
    <property type="entry name" value="RIBOSOMALL27"/>
</dbReference>
<dbReference type="SUPFAM" id="SSF110324">
    <property type="entry name" value="Ribosomal L27 protein-like"/>
    <property type="match status" value="1"/>
</dbReference>
<dbReference type="PROSITE" id="PS00831">
    <property type="entry name" value="RIBOSOMAL_L27"/>
    <property type="match status" value="1"/>
</dbReference>
<feature type="chain" id="PRO_0000181129" description="Large ribosomal subunit protein bL27">
    <location>
        <begin position="1"/>
        <end position="85"/>
    </location>
</feature>
<feature type="region of interest" description="Disordered" evidence="2">
    <location>
        <begin position="1"/>
        <end position="22"/>
    </location>
</feature>
<evidence type="ECO:0000255" key="1">
    <source>
        <dbReference type="HAMAP-Rule" id="MF_00539"/>
    </source>
</evidence>
<evidence type="ECO:0000256" key="2">
    <source>
        <dbReference type="SAM" id="MobiDB-lite"/>
    </source>
</evidence>
<evidence type="ECO:0000305" key="3"/>
<organism>
    <name type="scientific">Mycoplasmopsis pulmonis (strain UAB CTIP)</name>
    <name type="common">Mycoplasma pulmonis</name>
    <dbReference type="NCBI Taxonomy" id="272635"/>
    <lineage>
        <taxon>Bacteria</taxon>
        <taxon>Bacillati</taxon>
        <taxon>Mycoplasmatota</taxon>
        <taxon>Mycoplasmoidales</taxon>
        <taxon>Metamycoplasmataceae</taxon>
        <taxon>Mycoplasmopsis</taxon>
    </lineage>
</organism>
<gene>
    <name evidence="1" type="primary">rpmA</name>
    <name type="ordered locus">MYPU_3290</name>
</gene>
<accession>Q98QN2</accession>
<reference key="1">
    <citation type="journal article" date="2001" name="Nucleic Acids Res.">
        <title>The complete genome sequence of the murine respiratory pathogen Mycoplasma pulmonis.</title>
        <authorList>
            <person name="Chambaud I."/>
            <person name="Heilig R."/>
            <person name="Ferris S."/>
            <person name="Barbe V."/>
            <person name="Samson D."/>
            <person name="Galisson F."/>
            <person name="Moszer I."/>
            <person name="Dybvig K."/>
            <person name="Wroblewski H."/>
            <person name="Viari A."/>
            <person name="Rocha E.P.C."/>
            <person name="Blanchard A."/>
        </authorList>
    </citation>
    <scope>NUCLEOTIDE SEQUENCE [LARGE SCALE GENOMIC DNA]</scope>
    <source>
        <strain>UAB CTIP</strain>
    </source>
</reference>
<keyword id="KW-1185">Reference proteome</keyword>
<keyword id="KW-0687">Ribonucleoprotein</keyword>
<keyword id="KW-0689">Ribosomal protein</keyword>
<sequence>MAKTKAGGSTRNGRDSKGRRLGAKLGDGQFALAGSIIYRQRGTKIFPGQNVGRGNDDTLFMLVDGYVKYEKRRNRKYASVYQEKK</sequence>